<gene>
    <name evidence="1" type="primary">metK</name>
    <name type="ordered locus">Caur_3020</name>
</gene>
<feature type="chain" id="PRO_1000075367" description="S-adenosylmethionine synthase">
    <location>
        <begin position="1"/>
        <end position="403"/>
    </location>
</feature>
<feature type="region of interest" description="Flexible loop" evidence="1">
    <location>
        <begin position="107"/>
        <end position="117"/>
    </location>
</feature>
<feature type="binding site" description="in other chain" evidence="1">
    <location>
        <position position="22"/>
    </location>
    <ligand>
        <name>ATP</name>
        <dbReference type="ChEBI" id="CHEBI:30616"/>
        <note>ligand shared between two neighboring subunits</note>
    </ligand>
</feature>
<feature type="binding site" evidence="1">
    <location>
        <position position="24"/>
    </location>
    <ligand>
        <name>Mg(2+)</name>
        <dbReference type="ChEBI" id="CHEBI:18420"/>
    </ligand>
</feature>
<feature type="binding site" evidence="1">
    <location>
        <position position="50"/>
    </location>
    <ligand>
        <name>K(+)</name>
        <dbReference type="ChEBI" id="CHEBI:29103"/>
    </ligand>
</feature>
<feature type="binding site" description="in other chain" evidence="1">
    <location>
        <position position="63"/>
    </location>
    <ligand>
        <name>L-methionine</name>
        <dbReference type="ChEBI" id="CHEBI:57844"/>
        <note>ligand shared between two neighboring subunits</note>
    </ligand>
</feature>
<feature type="binding site" description="in other chain" evidence="1">
    <location>
        <position position="107"/>
    </location>
    <ligand>
        <name>L-methionine</name>
        <dbReference type="ChEBI" id="CHEBI:57844"/>
        <note>ligand shared between two neighboring subunits</note>
    </ligand>
</feature>
<feature type="binding site" description="in other chain" evidence="1">
    <location>
        <begin position="182"/>
        <end position="184"/>
    </location>
    <ligand>
        <name>ATP</name>
        <dbReference type="ChEBI" id="CHEBI:30616"/>
        <note>ligand shared between two neighboring subunits</note>
    </ligand>
</feature>
<feature type="binding site" description="in other chain" evidence="1">
    <location>
        <begin position="248"/>
        <end position="249"/>
    </location>
    <ligand>
        <name>ATP</name>
        <dbReference type="ChEBI" id="CHEBI:30616"/>
        <note>ligand shared between two neighboring subunits</note>
    </ligand>
</feature>
<feature type="binding site" evidence="1">
    <location>
        <position position="257"/>
    </location>
    <ligand>
        <name>ATP</name>
        <dbReference type="ChEBI" id="CHEBI:30616"/>
        <note>ligand shared between two neighboring subunits</note>
    </ligand>
</feature>
<feature type="binding site" evidence="1">
    <location>
        <position position="257"/>
    </location>
    <ligand>
        <name>L-methionine</name>
        <dbReference type="ChEBI" id="CHEBI:57844"/>
        <note>ligand shared between two neighboring subunits</note>
    </ligand>
</feature>
<feature type="binding site" description="in other chain" evidence="1">
    <location>
        <begin position="263"/>
        <end position="264"/>
    </location>
    <ligand>
        <name>ATP</name>
        <dbReference type="ChEBI" id="CHEBI:30616"/>
        <note>ligand shared between two neighboring subunits</note>
    </ligand>
</feature>
<feature type="binding site" evidence="1">
    <location>
        <position position="280"/>
    </location>
    <ligand>
        <name>ATP</name>
        <dbReference type="ChEBI" id="CHEBI:30616"/>
        <note>ligand shared between two neighboring subunits</note>
    </ligand>
</feature>
<feature type="binding site" evidence="1">
    <location>
        <position position="284"/>
    </location>
    <ligand>
        <name>ATP</name>
        <dbReference type="ChEBI" id="CHEBI:30616"/>
        <note>ligand shared between two neighboring subunits</note>
    </ligand>
</feature>
<feature type="binding site" description="in other chain" evidence="1">
    <location>
        <position position="288"/>
    </location>
    <ligand>
        <name>L-methionine</name>
        <dbReference type="ChEBI" id="CHEBI:57844"/>
        <note>ligand shared between two neighboring subunits</note>
    </ligand>
</feature>
<proteinExistence type="inferred from homology"/>
<sequence length="403" mass="43880">MANTFMNSPRFYFTSESVSEGHPDKMCDQISDAILDAFLSHDPKARVAVETATTTGLIVVLGEVTYERGYIPIEEIVRRTVKEIGYTSAEYGFDADTCGVMVAIHGQSPDIAMGVDKALEAKIGAMADDVEAVGAGDQGMMFGFACDETPELMPASIALAHRLIRRLERVRKDGTLPYLRPDAKSQVTVEYSFGKPVRVDTVLISSQHAPDITQDQIRADLIEHVIKTEIPEAWLDSQTKIFINPTGRFVIGGPMGDSGLTGRKIIVDTYGGVARHGGGAFSGKDPSKVDRSAAYACRWVAKNIVAAGLARRVELQVSYAIGVARPLSLSVETFGTAAVPDEVILKAVNEVFDLRPGAIIRDLDLRRPIYRKTAAGGHFGRTDIDLPWERTNRVEELRRAAGL</sequence>
<accession>A9WGQ3</accession>
<name>METK_CHLAA</name>
<protein>
    <recommendedName>
        <fullName evidence="1">S-adenosylmethionine synthase</fullName>
        <shortName evidence="1">AdoMet synthase</shortName>
        <ecNumber evidence="1">2.5.1.6</ecNumber>
    </recommendedName>
    <alternativeName>
        <fullName evidence="1">MAT</fullName>
    </alternativeName>
    <alternativeName>
        <fullName evidence="1">Methionine adenosyltransferase</fullName>
    </alternativeName>
</protein>
<dbReference type="EC" id="2.5.1.6" evidence="1"/>
<dbReference type="EMBL" id="CP000909">
    <property type="protein sequence ID" value="ABY36219.1"/>
    <property type="molecule type" value="Genomic_DNA"/>
</dbReference>
<dbReference type="RefSeq" id="WP_012258872.1">
    <property type="nucleotide sequence ID" value="NC_010175.1"/>
</dbReference>
<dbReference type="RefSeq" id="YP_001636608.1">
    <property type="nucleotide sequence ID" value="NC_010175.1"/>
</dbReference>
<dbReference type="SMR" id="A9WGQ3"/>
<dbReference type="FunCoup" id="A9WGQ3">
    <property type="interactions" value="478"/>
</dbReference>
<dbReference type="STRING" id="324602.Caur_3020"/>
<dbReference type="EnsemblBacteria" id="ABY36219">
    <property type="protein sequence ID" value="ABY36219"/>
    <property type="gene ID" value="Caur_3020"/>
</dbReference>
<dbReference type="KEGG" id="cau:Caur_3020"/>
<dbReference type="PATRIC" id="fig|324602.8.peg.3421"/>
<dbReference type="eggNOG" id="COG0192">
    <property type="taxonomic scope" value="Bacteria"/>
</dbReference>
<dbReference type="HOGENOM" id="CLU_041802_1_1_0"/>
<dbReference type="InParanoid" id="A9WGQ3"/>
<dbReference type="UniPathway" id="UPA00315">
    <property type="reaction ID" value="UER00080"/>
</dbReference>
<dbReference type="Proteomes" id="UP000002008">
    <property type="component" value="Chromosome"/>
</dbReference>
<dbReference type="GO" id="GO:0005829">
    <property type="term" value="C:cytosol"/>
    <property type="evidence" value="ECO:0000318"/>
    <property type="project" value="GO_Central"/>
</dbReference>
<dbReference type="GO" id="GO:0005524">
    <property type="term" value="F:ATP binding"/>
    <property type="evidence" value="ECO:0007669"/>
    <property type="project" value="UniProtKB-UniRule"/>
</dbReference>
<dbReference type="GO" id="GO:0000287">
    <property type="term" value="F:magnesium ion binding"/>
    <property type="evidence" value="ECO:0007669"/>
    <property type="project" value="UniProtKB-UniRule"/>
</dbReference>
<dbReference type="GO" id="GO:0004478">
    <property type="term" value="F:methionine adenosyltransferase activity"/>
    <property type="evidence" value="ECO:0000318"/>
    <property type="project" value="GO_Central"/>
</dbReference>
<dbReference type="GO" id="GO:0006730">
    <property type="term" value="P:one-carbon metabolic process"/>
    <property type="evidence" value="ECO:0007669"/>
    <property type="project" value="UniProtKB-KW"/>
</dbReference>
<dbReference type="GO" id="GO:0006556">
    <property type="term" value="P:S-adenosylmethionine biosynthetic process"/>
    <property type="evidence" value="ECO:0000318"/>
    <property type="project" value="GO_Central"/>
</dbReference>
<dbReference type="CDD" id="cd18079">
    <property type="entry name" value="S-AdoMet_synt"/>
    <property type="match status" value="1"/>
</dbReference>
<dbReference type="FunFam" id="3.30.300.10:FF:000003">
    <property type="entry name" value="S-adenosylmethionine synthase"/>
    <property type="match status" value="1"/>
</dbReference>
<dbReference type="FunFam" id="3.30.300.10:FF:000004">
    <property type="entry name" value="S-adenosylmethionine synthase"/>
    <property type="match status" value="1"/>
</dbReference>
<dbReference type="Gene3D" id="3.30.300.10">
    <property type="match status" value="3"/>
</dbReference>
<dbReference type="HAMAP" id="MF_00086">
    <property type="entry name" value="S_AdoMet_synth1"/>
    <property type="match status" value="1"/>
</dbReference>
<dbReference type="InterPro" id="IPR022631">
    <property type="entry name" value="ADOMET_SYNTHASE_CS"/>
</dbReference>
<dbReference type="InterPro" id="IPR022630">
    <property type="entry name" value="S-AdoMet_synt_C"/>
</dbReference>
<dbReference type="InterPro" id="IPR022629">
    <property type="entry name" value="S-AdoMet_synt_central"/>
</dbReference>
<dbReference type="InterPro" id="IPR022628">
    <property type="entry name" value="S-AdoMet_synt_N"/>
</dbReference>
<dbReference type="InterPro" id="IPR002133">
    <property type="entry name" value="S-AdoMet_synthetase"/>
</dbReference>
<dbReference type="InterPro" id="IPR022636">
    <property type="entry name" value="S-AdoMet_synthetase_sfam"/>
</dbReference>
<dbReference type="NCBIfam" id="TIGR01034">
    <property type="entry name" value="metK"/>
    <property type="match status" value="1"/>
</dbReference>
<dbReference type="PANTHER" id="PTHR11964">
    <property type="entry name" value="S-ADENOSYLMETHIONINE SYNTHETASE"/>
    <property type="match status" value="1"/>
</dbReference>
<dbReference type="Pfam" id="PF02773">
    <property type="entry name" value="S-AdoMet_synt_C"/>
    <property type="match status" value="1"/>
</dbReference>
<dbReference type="Pfam" id="PF02772">
    <property type="entry name" value="S-AdoMet_synt_M"/>
    <property type="match status" value="1"/>
</dbReference>
<dbReference type="Pfam" id="PF00438">
    <property type="entry name" value="S-AdoMet_synt_N"/>
    <property type="match status" value="1"/>
</dbReference>
<dbReference type="PIRSF" id="PIRSF000497">
    <property type="entry name" value="MAT"/>
    <property type="match status" value="1"/>
</dbReference>
<dbReference type="SUPFAM" id="SSF55973">
    <property type="entry name" value="S-adenosylmethionine synthetase"/>
    <property type="match status" value="3"/>
</dbReference>
<dbReference type="PROSITE" id="PS00376">
    <property type="entry name" value="ADOMET_SYNTHASE_1"/>
    <property type="match status" value="1"/>
</dbReference>
<dbReference type="PROSITE" id="PS00377">
    <property type="entry name" value="ADOMET_SYNTHASE_2"/>
    <property type="match status" value="1"/>
</dbReference>
<comment type="function">
    <text evidence="1">Catalyzes the formation of S-adenosylmethionine (AdoMet) from methionine and ATP. The overall synthetic reaction is composed of two sequential steps, AdoMet formation and the subsequent tripolyphosphate hydrolysis which occurs prior to release of AdoMet from the enzyme.</text>
</comment>
<comment type="catalytic activity">
    <reaction evidence="1">
        <text>L-methionine + ATP + H2O = S-adenosyl-L-methionine + phosphate + diphosphate</text>
        <dbReference type="Rhea" id="RHEA:21080"/>
        <dbReference type="ChEBI" id="CHEBI:15377"/>
        <dbReference type="ChEBI" id="CHEBI:30616"/>
        <dbReference type="ChEBI" id="CHEBI:33019"/>
        <dbReference type="ChEBI" id="CHEBI:43474"/>
        <dbReference type="ChEBI" id="CHEBI:57844"/>
        <dbReference type="ChEBI" id="CHEBI:59789"/>
        <dbReference type="EC" id="2.5.1.6"/>
    </reaction>
</comment>
<comment type="cofactor">
    <cofactor evidence="1">
        <name>Mg(2+)</name>
        <dbReference type="ChEBI" id="CHEBI:18420"/>
    </cofactor>
    <text evidence="1">Binds 2 divalent ions per subunit.</text>
</comment>
<comment type="cofactor">
    <cofactor evidence="1">
        <name>K(+)</name>
        <dbReference type="ChEBI" id="CHEBI:29103"/>
    </cofactor>
    <text evidence="1">Binds 1 potassium ion per subunit.</text>
</comment>
<comment type="pathway">
    <text evidence="1">Amino-acid biosynthesis; S-adenosyl-L-methionine biosynthesis; S-adenosyl-L-methionine from L-methionine: step 1/1.</text>
</comment>
<comment type="subunit">
    <text evidence="1">Homotetramer; dimer of dimers.</text>
</comment>
<comment type="subcellular location">
    <subcellularLocation>
        <location evidence="1">Cytoplasm</location>
    </subcellularLocation>
</comment>
<comment type="similarity">
    <text evidence="1">Belongs to the AdoMet synthase family.</text>
</comment>
<keyword id="KW-0067">ATP-binding</keyword>
<keyword id="KW-0963">Cytoplasm</keyword>
<keyword id="KW-0460">Magnesium</keyword>
<keyword id="KW-0479">Metal-binding</keyword>
<keyword id="KW-0547">Nucleotide-binding</keyword>
<keyword id="KW-0554">One-carbon metabolism</keyword>
<keyword id="KW-0630">Potassium</keyword>
<keyword id="KW-1185">Reference proteome</keyword>
<keyword id="KW-0808">Transferase</keyword>
<evidence type="ECO:0000255" key="1">
    <source>
        <dbReference type="HAMAP-Rule" id="MF_00086"/>
    </source>
</evidence>
<organism>
    <name type="scientific">Chloroflexus aurantiacus (strain ATCC 29366 / DSM 635 / J-10-fl)</name>
    <dbReference type="NCBI Taxonomy" id="324602"/>
    <lineage>
        <taxon>Bacteria</taxon>
        <taxon>Bacillati</taxon>
        <taxon>Chloroflexota</taxon>
        <taxon>Chloroflexia</taxon>
        <taxon>Chloroflexales</taxon>
        <taxon>Chloroflexineae</taxon>
        <taxon>Chloroflexaceae</taxon>
        <taxon>Chloroflexus</taxon>
    </lineage>
</organism>
<reference key="1">
    <citation type="journal article" date="2011" name="BMC Genomics">
        <title>Complete genome sequence of the filamentous anoxygenic phototrophic bacterium Chloroflexus aurantiacus.</title>
        <authorList>
            <person name="Tang K.H."/>
            <person name="Barry K."/>
            <person name="Chertkov O."/>
            <person name="Dalin E."/>
            <person name="Han C.S."/>
            <person name="Hauser L.J."/>
            <person name="Honchak B.M."/>
            <person name="Karbach L.E."/>
            <person name="Land M.L."/>
            <person name="Lapidus A."/>
            <person name="Larimer F.W."/>
            <person name="Mikhailova N."/>
            <person name="Pitluck S."/>
            <person name="Pierson B.K."/>
            <person name="Blankenship R.E."/>
        </authorList>
    </citation>
    <scope>NUCLEOTIDE SEQUENCE [LARGE SCALE GENOMIC DNA]</scope>
    <source>
        <strain>ATCC 29366 / DSM 635 / J-10-fl</strain>
    </source>
</reference>